<protein>
    <recommendedName>
        <fullName>Elastin-binding protein EbpS</fullName>
    </recommendedName>
</protein>
<organism>
    <name type="scientific">Staphylococcus aureus (strain MW2)</name>
    <dbReference type="NCBI Taxonomy" id="196620"/>
    <lineage>
        <taxon>Bacteria</taxon>
        <taxon>Bacillati</taxon>
        <taxon>Bacillota</taxon>
        <taxon>Bacilli</taxon>
        <taxon>Bacillales</taxon>
        <taxon>Staphylococcaceae</taxon>
        <taxon>Staphylococcus</taxon>
    </lineage>
</organism>
<reference key="1">
    <citation type="journal article" date="2002" name="Lancet">
        <title>Genome and virulence determinants of high virulence community-acquired MRSA.</title>
        <authorList>
            <person name="Baba T."/>
            <person name="Takeuchi F."/>
            <person name="Kuroda M."/>
            <person name="Yuzawa H."/>
            <person name="Aoki K."/>
            <person name="Oguchi A."/>
            <person name="Nagai Y."/>
            <person name="Iwama N."/>
            <person name="Asano K."/>
            <person name="Naimi T."/>
            <person name="Kuroda H."/>
            <person name="Cui L."/>
            <person name="Yamamoto K."/>
            <person name="Hiramatsu K."/>
        </authorList>
    </citation>
    <scope>NUCLEOTIDE SEQUENCE [LARGE SCALE GENOMIC DNA]</scope>
    <source>
        <strain>MW2</strain>
    </source>
</reference>
<proteinExistence type="inferred from homology"/>
<accession>Q8NWM5</accession>
<feature type="initiator methionine" description="Removed" evidence="1">
    <location>
        <position position="1"/>
    </location>
</feature>
<feature type="chain" id="PRO_0000271737" description="Elastin-binding protein EbpS">
    <location>
        <begin position="2"/>
        <end position="486"/>
    </location>
</feature>
<feature type="topological domain" description="Extracellular" evidence="2">
    <location>
        <begin position="2"/>
        <end position="204"/>
    </location>
</feature>
<feature type="transmembrane region" description="Helical" evidence="2">
    <location>
        <begin position="205"/>
        <end position="225"/>
    </location>
</feature>
<feature type="topological domain" description="Cytoplasmic" evidence="2">
    <location>
        <begin position="226"/>
        <end position="319"/>
    </location>
</feature>
<feature type="transmembrane region" description="Helical" evidence="2">
    <location>
        <begin position="320"/>
        <end position="340"/>
    </location>
</feature>
<feature type="topological domain" description="Extracellular" evidence="2">
    <location>
        <begin position="341"/>
        <end position="486"/>
    </location>
</feature>
<feature type="domain" description="LysM" evidence="3">
    <location>
        <begin position="437"/>
        <end position="485"/>
    </location>
</feature>
<feature type="region of interest" description="Disordered" evidence="4">
    <location>
        <begin position="1"/>
        <end position="314"/>
    </location>
</feature>
<feature type="region of interest" description="Elastin-binding" evidence="1">
    <location>
        <begin position="14"/>
        <end position="34"/>
    </location>
</feature>
<feature type="region of interest" description="Disordered" evidence="4">
    <location>
        <begin position="351"/>
        <end position="440"/>
    </location>
</feature>
<feature type="compositionally biased region" description="Basic and acidic residues" evidence="4">
    <location>
        <begin position="1"/>
        <end position="40"/>
    </location>
</feature>
<feature type="compositionally biased region" description="Polar residues" evidence="4">
    <location>
        <begin position="64"/>
        <end position="85"/>
    </location>
</feature>
<feature type="compositionally biased region" description="Basic and acidic residues" evidence="4">
    <location>
        <begin position="103"/>
        <end position="118"/>
    </location>
</feature>
<feature type="compositionally biased region" description="Basic and acidic residues" evidence="4">
    <location>
        <begin position="126"/>
        <end position="160"/>
    </location>
</feature>
<feature type="compositionally biased region" description="Basic and acidic residues" evidence="4">
    <location>
        <begin position="180"/>
        <end position="199"/>
    </location>
</feature>
<feature type="compositionally biased region" description="Low complexity" evidence="4">
    <location>
        <begin position="204"/>
        <end position="225"/>
    </location>
</feature>
<feature type="compositionally biased region" description="Low complexity" evidence="4">
    <location>
        <begin position="233"/>
        <end position="246"/>
    </location>
</feature>
<feature type="compositionally biased region" description="Basic and acidic residues" evidence="4">
    <location>
        <begin position="247"/>
        <end position="259"/>
    </location>
</feature>
<feature type="compositionally biased region" description="Low complexity" evidence="4">
    <location>
        <begin position="278"/>
        <end position="297"/>
    </location>
</feature>
<feature type="compositionally biased region" description="Basic and acidic residues" evidence="4">
    <location>
        <begin position="299"/>
        <end position="314"/>
    </location>
</feature>
<feature type="compositionally biased region" description="Basic and acidic residues" evidence="4">
    <location>
        <begin position="361"/>
        <end position="398"/>
    </location>
</feature>
<feature type="compositionally biased region" description="Low complexity" evidence="4">
    <location>
        <begin position="403"/>
        <end position="431"/>
    </location>
</feature>
<gene>
    <name type="primary">ebpS</name>
    <name type="ordered locus">MW1369</name>
</gene>
<evidence type="ECO:0000250" key="1"/>
<evidence type="ECO:0000255" key="2"/>
<evidence type="ECO:0000255" key="3">
    <source>
        <dbReference type="PROSITE-ProRule" id="PRU01118"/>
    </source>
</evidence>
<evidence type="ECO:0000256" key="4">
    <source>
        <dbReference type="SAM" id="MobiDB-lite"/>
    </source>
</evidence>
<dbReference type="EMBL" id="BA000033">
    <property type="protein sequence ID" value="BAB95234.1"/>
    <property type="molecule type" value="Genomic_DNA"/>
</dbReference>
<dbReference type="RefSeq" id="WP_000069296.1">
    <property type="nucleotide sequence ID" value="NC_003923.1"/>
</dbReference>
<dbReference type="SMR" id="Q8NWM5"/>
<dbReference type="KEGG" id="sam:MW1369"/>
<dbReference type="HOGENOM" id="CLU_043950_0_0_9"/>
<dbReference type="PRO" id="PR:Q8NWM5"/>
<dbReference type="GO" id="GO:0005886">
    <property type="term" value="C:plasma membrane"/>
    <property type="evidence" value="ECO:0007669"/>
    <property type="project" value="UniProtKB-SubCell"/>
</dbReference>
<dbReference type="CDD" id="cd00118">
    <property type="entry name" value="LysM"/>
    <property type="match status" value="1"/>
</dbReference>
<dbReference type="Gene3D" id="3.10.350.10">
    <property type="entry name" value="LysM domain"/>
    <property type="match status" value="1"/>
</dbReference>
<dbReference type="InterPro" id="IPR018392">
    <property type="entry name" value="LysM_dom"/>
</dbReference>
<dbReference type="InterPro" id="IPR036779">
    <property type="entry name" value="LysM_dom_sf"/>
</dbReference>
<dbReference type="NCBIfam" id="NF033598">
    <property type="entry name" value="elast_bind_EbpS"/>
    <property type="match status" value="1"/>
</dbReference>
<dbReference type="Pfam" id="PF01476">
    <property type="entry name" value="LysM"/>
    <property type="match status" value="1"/>
</dbReference>
<dbReference type="SMART" id="SM00257">
    <property type="entry name" value="LysM"/>
    <property type="match status" value="1"/>
</dbReference>
<dbReference type="SUPFAM" id="SSF54106">
    <property type="entry name" value="LysM domain"/>
    <property type="match status" value="1"/>
</dbReference>
<dbReference type="PROSITE" id="PS51782">
    <property type="entry name" value="LYSM"/>
    <property type="match status" value="1"/>
</dbReference>
<sequence>MSNNFKDDFEKNRQSIDTNSHQDHTEDVEKDQSELEHQDTIENTEQQFPPRNAQRRKRRRDLATNHNKQVHNESQTSEDNVQNEAGTIDDRQVESSHSTESQEPSHQDSTPQHEEEYYNKNAFAMDKSHPEPIEDNDKHETIKEAENNTEHSTVSDKSEAEQSQQPKPYFATGANQANTSKDKHDDVTVKQDKDESKDHHSGKKGAAIGAGTAGVAGAAGAMGVSKAKKHSNDAQNKSNSDKSNNSTEDKVSQDKSKDHHNGKKGAAIGAGTAGLAGGAASKSASAASKPHASNNASQNHDEHDNHDRDKERKKGGMAKVLLPLIAAVLIIGALAIFGGMALNNHNNGTKENKIANTNKNNADESKDKDTSKDASKDKSKSTDSDKSKEDQDKATKDESDNDQNNANQANNQAQNNQNQQQANQNQQQQQQRQGGGQRHTVNGQENLYRIAIQYYGSGSPENVEKIRRANGLSGNNIRNGQQIVIP</sequence>
<name>EBPS_STAAW</name>
<comment type="function">
    <text evidence="1">Promotes binding of soluble elastin peptides and tropoelastin to S.aureus cells although it is not able to promote bacterial adherence to immobilized elastin and, therefore, is not a microbial surface component recognizing adhesive matrix molecule (MSCRAMM).</text>
</comment>
<comment type="subcellular location">
    <subcellularLocation>
        <location evidence="1">Cell membrane</location>
        <topology evidence="1">Multi-pass membrane protein</topology>
    </subcellularLocation>
</comment>
<comment type="domain">
    <text evidence="1">The elastin-binding domain is located between residues 13-33 at the surface-exposed N-terminus, whereas the C-terminus, containing the LysM peptidoglycan-binding domain, is not exposed on the surface of intact cells and presumably remains buried within the peptidoglycan. The presence of the TNSHQD sequence, corresponding to residues 18-23, is essential for EbpS activity but not sufficient, additional flanking amino acids in the amino- or carboxy-terminal are required for elastin recognition (By similarity).</text>
</comment>
<keyword id="KW-1003">Cell membrane</keyword>
<keyword id="KW-0472">Membrane</keyword>
<keyword id="KW-0812">Transmembrane</keyword>
<keyword id="KW-1133">Transmembrane helix</keyword>